<protein>
    <recommendedName>
        <fullName evidence="1">Fluoride-specific ion channel FluC</fullName>
    </recommendedName>
</protein>
<evidence type="ECO:0000255" key="1">
    <source>
        <dbReference type="HAMAP-Rule" id="MF_00454"/>
    </source>
</evidence>
<gene>
    <name evidence="1" type="primary">fluC</name>
    <name evidence="1" type="synonym">crcB</name>
    <name type="ordered locus">TTHA0335</name>
</gene>
<sequence length="125" mass="12856">MERYLLVALGGALGSLLRYGLGALVQGSLGAGFPWSTLFVNALGSFLIGLTLRLSLEGALSGEARLFLAVGVLGGFTTFSSLSYETLALLQGGEVGKALLYAFGSLFLGLFLAFLGYRLGGALVG</sequence>
<name>FLUC_THET8</name>
<comment type="function">
    <text evidence="1">Fluoride-specific ion channel. Important for reducing fluoride concentration in the cell, thus reducing its toxicity.</text>
</comment>
<comment type="catalytic activity">
    <reaction evidence="1">
        <text>fluoride(in) = fluoride(out)</text>
        <dbReference type="Rhea" id="RHEA:76159"/>
        <dbReference type="ChEBI" id="CHEBI:17051"/>
    </reaction>
    <physiologicalReaction direction="left-to-right" evidence="1">
        <dbReference type="Rhea" id="RHEA:76160"/>
    </physiologicalReaction>
</comment>
<comment type="activity regulation">
    <text evidence="1">Na(+) is not transported, but it plays an essential structural role and its presence is essential for fluoride channel function.</text>
</comment>
<comment type="subcellular location">
    <subcellularLocation>
        <location evidence="1">Cell inner membrane</location>
        <topology evidence="1">Multi-pass membrane protein</topology>
    </subcellularLocation>
</comment>
<comment type="similarity">
    <text evidence="1">Belongs to the fluoride channel Fluc/FEX (TC 1.A.43) family.</text>
</comment>
<feature type="chain" id="PRO_0000110205" description="Fluoride-specific ion channel FluC">
    <location>
        <begin position="1"/>
        <end position="125"/>
    </location>
</feature>
<feature type="transmembrane region" description="Helical" evidence="1">
    <location>
        <begin position="5"/>
        <end position="25"/>
    </location>
</feature>
<feature type="transmembrane region" description="Helical" evidence="1">
    <location>
        <begin position="29"/>
        <end position="49"/>
    </location>
</feature>
<feature type="transmembrane region" description="Helical" evidence="1">
    <location>
        <begin position="66"/>
        <end position="86"/>
    </location>
</feature>
<feature type="transmembrane region" description="Helical" evidence="1">
    <location>
        <begin position="95"/>
        <end position="115"/>
    </location>
</feature>
<feature type="binding site" evidence="1">
    <location>
        <position position="74"/>
    </location>
    <ligand>
        <name>Na(+)</name>
        <dbReference type="ChEBI" id="CHEBI:29101"/>
        <note>structural</note>
    </ligand>
</feature>
<feature type="binding site" evidence="1">
    <location>
        <position position="77"/>
    </location>
    <ligand>
        <name>Na(+)</name>
        <dbReference type="ChEBI" id="CHEBI:29101"/>
        <note>structural</note>
    </ligand>
</feature>
<dbReference type="EMBL" id="AP008226">
    <property type="protein sequence ID" value="BAD70158.1"/>
    <property type="molecule type" value="Genomic_DNA"/>
</dbReference>
<dbReference type="RefSeq" id="WP_011227866.1">
    <property type="nucleotide sequence ID" value="NC_006461.1"/>
</dbReference>
<dbReference type="RefSeq" id="YP_143601.1">
    <property type="nucleotide sequence ID" value="NC_006461.1"/>
</dbReference>
<dbReference type="SMR" id="Q5SLF8"/>
<dbReference type="EnsemblBacteria" id="BAD70158">
    <property type="protein sequence ID" value="BAD70158"/>
    <property type="gene ID" value="BAD70158"/>
</dbReference>
<dbReference type="GeneID" id="3168894"/>
<dbReference type="KEGG" id="ttj:TTHA0335"/>
<dbReference type="PATRIC" id="fig|300852.9.peg.335"/>
<dbReference type="eggNOG" id="COG0239">
    <property type="taxonomic scope" value="Bacteria"/>
</dbReference>
<dbReference type="HOGENOM" id="CLU_114342_2_3_0"/>
<dbReference type="PhylomeDB" id="Q5SLF8"/>
<dbReference type="Proteomes" id="UP000000532">
    <property type="component" value="Chromosome"/>
</dbReference>
<dbReference type="GO" id="GO:0005886">
    <property type="term" value="C:plasma membrane"/>
    <property type="evidence" value="ECO:0007669"/>
    <property type="project" value="UniProtKB-SubCell"/>
</dbReference>
<dbReference type="GO" id="GO:0062054">
    <property type="term" value="F:fluoride channel activity"/>
    <property type="evidence" value="ECO:0007669"/>
    <property type="project" value="UniProtKB-UniRule"/>
</dbReference>
<dbReference type="GO" id="GO:0046872">
    <property type="term" value="F:metal ion binding"/>
    <property type="evidence" value="ECO:0007669"/>
    <property type="project" value="UniProtKB-KW"/>
</dbReference>
<dbReference type="GO" id="GO:0140114">
    <property type="term" value="P:cellular detoxification of fluoride"/>
    <property type="evidence" value="ECO:0007669"/>
    <property type="project" value="UniProtKB-UniRule"/>
</dbReference>
<dbReference type="HAMAP" id="MF_00454">
    <property type="entry name" value="FluC"/>
    <property type="match status" value="1"/>
</dbReference>
<dbReference type="InterPro" id="IPR003691">
    <property type="entry name" value="FluC"/>
</dbReference>
<dbReference type="NCBIfam" id="TIGR00494">
    <property type="entry name" value="crcB"/>
    <property type="match status" value="1"/>
</dbReference>
<dbReference type="PANTHER" id="PTHR28259">
    <property type="entry name" value="FLUORIDE EXPORT PROTEIN 1-RELATED"/>
    <property type="match status" value="1"/>
</dbReference>
<dbReference type="PANTHER" id="PTHR28259:SF1">
    <property type="entry name" value="FLUORIDE EXPORT PROTEIN 1-RELATED"/>
    <property type="match status" value="1"/>
</dbReference>
<dbReference type="Pfam" id="PF02537">
    <property type="entry name" value="CRCB"/>
    <property type="match status" value="1"/>
</dbReference>
<reference key="1">
    <citation type="submission" date="2004-11" db="EMBL/GenBank/DDBJ databases">
        <title>Complete genome sequence of Thermus thermophilus HB8.</title>
        <authorList>
            <person name="Masui R."/>
            <person name="Kurokawa K."/>
            <person name="Nakagawa N."/>
            <person name="Tokunaga F."/>
            <person name="Koyama Y."/>
            <person name="Shibata T."/>
            <person name="Oshima T."/>
            <person name="Yokoyama S."/>
            <person name="Yasunaga T."/>
            <person name="Kuramitsu S."/>
        </authorList>
    </citation>
    <scope>NUCLEOTIDE SEQUENCE [LARGE SCALE GENOMIC DNA]</scope>
    <source>
        <strain>ATCC 27634 / DSM 579 / HB8</strain>
    </source>
</reference>
<keyword id="KW-0997">Cell inner membrane</keyword>
<keyword id="KW-1003">Cell membrane</keyword>
<keyword id="KW-0407">Ion channel</keyword>
<keyword id="KW-0406">Ion transport</keyword>
<keyword id="KW-0472">Membrane</keyword>
<keyword id="KW-0479">Metal-binding</keyword>
<keyword id="KW-1185">Reference proteome</keyword>
<keyword id="KW-0915">Sodium</keyword>
<keyword id="KW-0812">Transmembrane</keyword>
<keyword id="KW-1133">Transmembrane helix</keyword>
<keyword id="KW-0813">Transport</keyword>
<proteinExistence type="inferred from homology"/>
<accession>Q5SLF8</accession>
<organism>
    <name type="scientific">Thermus thermophilus (strain ATCC 27634 / DSM 579 / HB8)</name>
    <dbReference type="NCBI Taxonomy" id="300852"/>
    <lineage>
        <taxon>Bacteria</taxon>
        <taxon>Thermotogati</taxon>
        <taxon>Deinococcota</taxon>
        <taxon>Deinococci</taxon>
        <taxon>Thermales</taxon>
        <taxon>Thermaceae</taxon>
        <taxon>Thermus</taxon>
    </lineage>
</organism>